<comment type="function">
    <text evidence="3">Negative regulator of innate antiviral response. Blocks IRF3-dependent cytokine production such as IFNA, IFNB and TNF (PubMed:29802199). Interacts with IRF3 and inhibits IRF3 recruitment to type I IFN promoter sequences while also reducing nuclear levels of the coactivators EP300 and CREBBP (PubMed:29802199).</text>
</comment>
<comment type="subunit">
    <text evidence="3">Interacts with IRF3; the interaction inhibits IRF3 binding to its DNA consensus sequence.</text>
</comment>
<comment type="subcellular location">
    <subcellularLocation>
        <location evidence="2 3">Cytoplasm</location>
    </subcellularLocation>
    <subcellularLocation>
        <location evidence="3">Nucleus</location>
    </subcellularLocation>
</comment>
<comment type="alternative products">
    <event type="alternative splicing"/>
    <isoform>
        <id>Q9H6K1-1</id>
        <name>1</name>
        <sequence type="displayed"/>
    </isoform>
    <isoform>
        <id>Q9H6K1-2</id>
        <name>2</name>
        <sequence type="described" ref="VSP_017259"/>
    </isoform>
</comment>
<comment type="tissue specificity">
    <text evidence="2">Expressed in lung (at protein level).</text>
</comment>
<comment type="induction">
    <text evidence="3">Expression is icreased in presence of dsRNA such as poly(I:C).</text>
</comment>
<proteinExistence type="evidence at protein level"/>
<organism>
    <name type="scientific">Homo sapiens</name>
    <name type="common">Human</name>
    <dbReference type="NCBI Taxonomy" id="9606"/>
    <lineage>
        <taxon>Eukaryota</taxon>
        <taxon>Metazoa</taxon>
        <taxon>Chordata</taxon>
        <taxon>Craniata</taxon>
        <taxon>Vertebrata</taxon>
        <taxon>Euteleostomi</taxon>
        <taxon>Mammalia</taxon>
        <taxon>Eutheria</taxon>
        <taxon>Euarchontoglires</taxon>
        <taxon>Primates</taxon>
        <taxon>Haplorrhini</taxon>
        <taxon>Catarrhini</taxon>
        <taxon>Hominidae</taxon>
        <taxon>Homo</taxon>
    </lineage>
</organism>
<accession>Q9H6K1</accession>
<accession>B2R8K7</accession>
<accession>Q5VV77</accession>
<accession>Q96MG5</accession>
<accession>Q9BUR9</accession>
<dbReference type="EMBL" id="AK025848">
    <property type="protein sequence ID" value="BAB15258.1"/>
    <property type="status" value="ALT_SEQ"/>
    <property type="molecule type" value="mRNA"/>
</dbReference>
<dbReference type="EMBL" id="AK056964">
    <property type="protein sequence ID" value="BAB71327.1"/>
    <property type="molecule type" value="mRNA"/>
</dbReference>
<dbReference type="EMBL" id="AK313410">
    <property type="protein sequence ID" value="BAG36204.1"/>
    <property type="molecule type" value="mRNA"/>
</dbReference>
<dbReference type="EMBL" id="AL031577">
    <property type="status" value="NOT_ANNOTATED_CDS"/>
    <property type="molecule type" value="Genomic_DNA"/>
</dbReference>
<dbReference type="EMBL" id="AL451165">
    <property type="status" value="NOT_ANNOTATED_CDS"/>
    <property type="molecule type" value="Genomic_DNA"/>
</dbReference>
<dbReference type="EMBL" id="CH471081">
    <property type="protein sequence ID" value="EAX03790.1"/>
    <property type="molecule type" value="Genomic_DNA"/>
</dbReference>
<dbReference type="EMBL" id="BC002328">
    <property type="protein sequence ID" value="AAH02328.1"/>
    <property type="molecule type" value="mRNA"/>
</dbReference>
<dbReference type="EMBL" id="BC010184">
    <property type="protein sequence ID" value="AAH10184.1"/>
    <property type="molecule type" value="mRNA"/>
</dbReference>
<dbReference type="EMBL" id="BC075810">
    <property type="protein sequence ID" value="AAH75810.1"/>
    <property type="molecule type" value="mRNA"/>
</dbReference>
<dbReference type="CCDS" id="CCDS4795.1">
    <molecule id="Q9H6K1-2"/>
</dbReference>
<dbReference type="CCDS" id="CCDS4796.1">
    <molecule id="Q9H6K1-1"/>
</dbReference>
<dbReference type="RefSeq" id="NP_073595.2">
    <molecule id="Q9H6K1-2"/>
    <property type="nucleotide sequence ID" value="NM_022758.5"/>
</dbReference>
<dbReference type="RefSeq" id="NP_077270.1">
    <molecule id="Q9H6K1-1"/>
    <property type="nucleotide sequence ID" value="NM_024294.4"/>
</dbReference>
<dbReference type="PDB" id="6VHI">
    <property type="method" value="X-ray"/>
    <property type="resolution" value="2.46 A"/>
    <property type="chains" value="A=64-185"/>
</dbReference>
<dbReference type="PDBsum" id="6VHI"/>
<dbReference type="SMR" id="Q9H6K1"/>
<dbReference type="BioGRID" id="122282">
    <property type="interactions" value="18"/>
</dbReference>
<dbReference type="FunCoup" id="Q9H6K1">
    <property type="interactions" value="2579"/>
</dbReference>
<dbReference type="IntAct" id="Q9H6K1">
    <property type="interactions" value="11"/>
</dbReference>
<dbReference type="STRING" id="9606.ENSP00000363135"/>
<dbReference type="GlyGen" id="Q9H6K1">
    <property type="glycosylation" value="1 site, 1 O-linked glycan (1 site)"/>
</dbReference>
<dbReference type="iPTMnet" id="Q9H6K1"/>
<dbReference type="PhosphoSitePlus" id="Q9H6K1"/>
<dbReference type="BioMuta" id="C6orf106"/>
<dbReference type="DMDM" id="88984085"/>
<dbReference type="jPOST" id="Q9H6K1"/>
<dbReference type="MassIVE" id="Q9H6K1"/>
<dbReference type="PaxDb" id="9606-ENSP00000363135"/>
<dbReference type="PeptideAtlas" id="Q9H6K1"/>
<dbReference type="ProteomicsDB" id="80993">
    <molecule id="Q9H6K1-1"/>
</dbReference>
<dbReference type="ProteomicsDB" id="80994">
    <molecule id="Q9H6K1-2"/>
</dbReference>
<dbReference type="Pumba" id="Q9H6K1"/>
<dbReference type="Antibodypedia" id="49290">
    <property type="antibodies" value="64 antibodies from 15 providers"/>
</dbReference>
<dbReference type="DNASU" id="64771"/>
<dbReference type="Ensembl" id="ENST00000374023.8">
    <molecule id="Q9H6K1-1"/>
    <property type="protein sequence ID" value="ENSP00000363135.3"/>
    <property type="gene ID" value="ENSG00000196821.10"/>
</dbReference>
<dbReference type="Ensembl" id="ENST00000374026.7">
    <molecule id="Q9H6K1-2"/>
    <property type="protein sequence ID" value="ENSP00000363138.3"/>
    <property type="gene ID" value="ENSG00000196821.10"/>
</dbReference>
<dbReference type="GeneID" id="64771"/>
<dbReference type="KEGG" id="hsa:64771"/>
<dbReference type="MANE-Select" id="ENST00000374023.8">
    <property type="protein sequence ID" value="ENSP00000363135.3"/>
    <property type="RefSeq nucleotide sequence ID" value="NM_024294.4"/>
    <property type="RefSeq protein sequence ID" value="NP_077270.1"/>
</dbReference>
<dbReference type="UCSC" id="uc003ojr.4">
    <molecule id="Q9H6K1-1"/>
    <property type="organism name" value="human"/>
</dbReference>
<dbReference type="AGR" id="HGNC:21215"/>
<dbReference type="CTD" id="64771"/>
<dbReference type="DisGeNET" id="64771"/>
<dbReference type="GeneCards" id="ILRUN"/>
<dbReference type="HGNC" id="HGNC:21215">
    <property type="gene designation" value="ILRUN"/>
</dbReference>
<dbReference type="HPA" id="ENSG00000196821">
    <property type="expression patterns" value="Tissue enhanced (skeletal)"/>
</dbReference>
<dbReference type="MIM" id="612217">
    <property type="type" value="gene"/>
</dbReference>
<dbReference type="neXtProt" id="NX_Q9H6K1"/>
<dbReference type="OpenTargets" id="ENSG00000196821"/>
<dbReference type="PharmGKB" id="PA134935866"/>
<dbReference type="VEuPathDB" id="HostDB:ENSG00000196821"/>
<dbReference type="eggNOG" id="KOG4351">
    <property type="taxonomic scope" value="Eukaryota"/>
</dbReference>
<dbReference type="GeneTree" id="ENSGT00490000043415"/>
<dbReference type="HOGENOM" id="CLU_076188_1_0_1"/>
<dbReference type="InParanoid" id="Q9H6K1"/>
<dbReference type="OMA" id="HWQGSPN"/>
<dbReference type="OrthoDB" id="661148at2759"/>
<dbReference type="PAN-GO" id="Q9H6K1">
    <property type="GO annotations" value="3 GO annotations based on evolutionary models"/>
</dbReference>
<dbReference type="PhylomeDB" id="Q9H6K1"/>
<dbReference type="TreeFam" id="TF105872"/>
<dbReference type="PathwayCommons" id="Q9H6K1"/>
<dbReference type="SignaLink" id="Q9H6K1"/>
<dbReference type="SIGNOR" id="Q9H6K1"/>
<dbReference type="BioGRID-ORCS" id="64771">
    <property type="hits" value="18 hits in 1121 CRISPR screens"/>
</dbReference>
<dbReference type="ChiTaRS" id="C6orf106">
    <property type="organism name" value="human"/>
</dbReference>
<dbReference type="GenomeRNAi" id="64771"/>
<dbReference type="Pharos" id="Q9H6K1">
    <property type="development level" value="Tbio"/>
</dbReference>
<dbReference type="PRO" id="PR:Q9H6K1"/>
<dbReference type="Proteomes" id="UP000005640">
    <property type="component" value="Chromosome 6"/>
</dbReference>
<dbReference type="RNAct" id="Q9H6K1">
    <property type="molecule type" value="protein"/>
</dbReference>
<dbReference type="Bgee" id="ENSG00000196821">
    <property type="expression patterns" value="Expressed in gastrocnemius and 206 other cell types or tissues"/>
</dbReference>
<dbReference type="ExpressionAtlas" id="Q9H6K1">
    <property type="expression patterns" value="baseline and differential"/>
</dbReference>
<dbReference type="GO" id="GO:0005813">
    <property type="term" value="C:centrosome"/>
    <property type="evidence" value="ECO:0000314"/>
    <property type="project" value="HPA"/>
</dbReference>
<dbReference type="GO" id="GO:0005737">
    <property type="term" value="C:cytoplasm"/>
    <property type="evidence" value="ECO:0000314"/>
    <property type="project" value="UniProtKB"/>
</dbReference>
<dbReference type="GO" id="GO:0005829">
    <property type="term" value="C:cytosol"/>
    <property type="evidence" value="ECO:0000314"/>
    <property type="project" value="HPA"/>
</dbReference>
<dbReference type="GO" id="GO:0016607">
    <property type="term" value="C:nuclear speck"/>
    <property type="evidence" value="ECO:0000314"/>
    <property type="project" value="HPA"/>
</dbReference>
<dbReference type="GO" id="GO:0005634">
    <property type="term" value="C:nucleus"/>
    <property type="evidence" value="ECO:0000314"/>
    <property type="project" value="UniProtKB"/>
</dbReference>
<dbReference type="GO" id="GO:0000407">
    <property type="term" value="C:phagophore assembly site"/>
    <property type="evidence" value="ECO:0000318"/>
    <property type="project" value="GO_Central"/>
</dbReference>
<dbReference type="GO" id="GO:0043130">
    <property type="term" value="F:ubiquitin binding"/>
    <property type="evidence" value="ECO:0000318"/>
    <property type="project" value="GO_Central"/>
</dbReference>
<dbReference type="GO" id="GO:0045087">
    <property type="term" value="P:innate immune response"/>
    <property type="evidence" value="ECO:0007669"/>
    <property type="project" value="UniProtKB-KW"/>
</dbReference>
<dbReference type="GO" id="GO:0016236">
    <property type="term" value="P:macroautophagy"/>
    <property type="evidence" value="ECO:0000318"/>
    <property type="project" value="GO_Central"/>
</dbReference>
<dbReference type="GO" id="GO:0050687">
    <property type="term" value="P:negative regulation of defense response to virus"/>
    <property type="evidence" value="ECO:0000315"/>
    <property type="project" value="UniProtKB"/>
</dbReference>
<dbReference type="GO" id="GO:0043392">
    <property type="term" value="P:negative regulation of DNA binding"/>
    <property type="evidence" value="ECO:0000314"/>
    <property type="project" value="UniProtKB"/>
</dbReference>
<dbReference type="GO" id="GO:1900181">
    <property type="term" value="P:negative regulation of protein localization to nucleus"/>
    <property type="evidence" value="ECO:0000315"/>
    <property type="project" value="UniProtKB"/>
</dbReference>
<dbReference type="GO" id="GO:0032720">
    <property type="term" value="P:negative regulation of tumor necrosis factor production"/>
    <property type="evidence" value="ECO:0000315"/>
    <property type="project" value="UniProtKB"/>
</dbReference>
<dbReference type="GO" id="GO:0032480">
    <property type="term" value="P:negative regulation of type I interferon production"/>
    <property type="evidence" value="ECO:0000315"/>
    <property type="project" value="UniProtKB"/>
</dbReference>
<dbReference type="CDD" id="cd14947">
    <property type="entry name" value="NBR1_like"/>
    <property type="match status" value="1"/>
</dbReference>
<dbReference type="CDD" id="cd14349">
    <property type="entry name" value="UBA_CF106"/>
    <property type="match status" value="1"/>
</dbReference>
<dbReference type="FunFam" id="1.10.8.10:FF:000015">
    <property type="entry name" value="Chromosome 6 C6orf106 homolog"/>
    <property type="match status" value="1"/>
</dbReference>
<dbReference type="FunFam" id="2.60.40.10:FF:000289">
    <property type="entry name" value="Chromosome 6 open reading frame 106"/>
    <property type="match status" value="1"/>
</dbReference>
<dbReference type="Gene3D" id="1.10.8.10">
    <property type="entry name" value="DNA helicase RuvA subunit, C-terminal domain"/>
    <property type="match status" value="1"/>
</dbReference>
<dbReference type="Gene3D" id="2.60.40.10">
    <property type="entry name" value="Immunoglobulins"/>
    <property type="match status" value="1"/>
</dbReference>
<dbReference type="InterPro" id="IPR039517">
    <property type="entry name" value="C6orf106_UBA-like"/>
</dbReference>
<dbReference type="InterPro" id="IPR013783">
    <property type="entry name" value="Ig-like_fold"/>
</dbReference>
<dbReference type="InterPro" id="IPR032350">
    <property type="entry name" value="N_BRCA1_central"/>
</dbReference>
<dbReference type="InterPro" id="IPR009060">
    <property type="entry name" value="UBA-like_sf"/>
</dbReference>
<dbReference type="PANTHER" id="PTHR20930">
    <property type="entry name" value="OVARIAN CARCINOMA ANTIGEN CA125-RELATED"/>
    <property type="match status" value="1"/>
</dbReference>
<dbReference type="PANTHER" id="PTHR20930:SF0">
    <property type="entry name" value="PROTEIN ILRUN"/>
    <property type="match status" value="1"/>
</dbReference>
<dbReference type="Pfam" id="PF16158">
    <property type="entry name" value="N_BRCA1_IG"/>
    <property type="match status" value="1"/>
</dbReference>
<dbReference type="Pfam" id="PF14555">
    <property type="entry name" value="UBA_4"/>
    <property type="match status" value="1"/>
</dbReference>
<dbReference type="SUPFAM" id="SSF46934">
    <property type="entry name" value="UBA-like"/>
    <property type="match status" value="1"/>
</dbReference>
<evidence type="ECO:0000256" key="1">
    <source>
        <dbReference type="SAM" id="MobiDB-lite"/>
    </source>
</evidence>
<evidence type="ECO:0000269" key="2">
    <source>
    </source>
</evidence>
<evidence type="ECO:0000269" key="3">
    <source>
    </source>
</evidence>
<evidence type="ECO:0000303" key="4">
    <source>
    </source>
</evidence>
<evidence type="ECO:0000305" key="5"/>
<evidence type="ECO:0000312" key="6">
    <source>
        <dbReference type="HGNC" id="HGNC:21215"/>
    </source>
</evidence>
<evidence type="ECO:0007744" key="7">
    <source>
    </source>
</evidence>
<evidence type="ECO:0007744" key="8">
    <source>
    </source>
</evidence>
<evidence type="ECO:0007744" key="9">
    <source>
    </source>
</evidence>
<evidence type="ECO:0007744" key="10">
    <source>
    </source>
</evidence>
<evidence type="ECO:0007829" key="11">
    <source>
        <dbReference type="PDB" id="6VHI"/>
    </source>
</evidence>
<name>ILRUN_HUMAN</name>
<protein>
    <recommendedName>
        <fullName evidence="5">Protein ILRUN</fullName>
    </recommendedName>
    <alternativeName>
        <fullName evidence="6">Inflammation and lipid regulator with UBA-like and NBR1-like domains protein</fullName>
    </alternativeName>
</protein>
<reference key="1">
    <citation type="journal article" date="2004" name="Nat. Genet.">
        <title>Complete sequencing and characterization of 21,243 full-length human cDNAs.</title>
        <authorList>
            <person name="Ota T."/>
            <person name="Suzuki Y."/>
            <person name="Nishikawa T."/>
            <person name="Otsuki T."/>
            <person name="Sugiyama T."/>
            <person name="Irie R."/>
            <person name="Wakamatsu A."/>
            <person name="Hayashi K."/>
            <person name="Sato H."/>
            <person name="Nagai K."/>
            <person name="Kimura K."/>
            <person name="Makita H."/>
            <person name="Sekine M."/>
            <person name="Obayashi M."/>
            <person name="Nishi T."/>
            <person name="Shibahara T."/>
            <person name="Tanaka T."/>
            <person name="Ishii S."/>
            <person name="Yamamoto J."/>
            <person name="Saito K."/>
            <person name="Kawai Y."/>
            <person name="Isono Y."/>
            <person name="Nakamura Y."/>
            <person name="Nagahari K."/>
            <person name="Murakami K."/>
            <person name="Yasuda T."/>
            <person name="Iwayanagi T."/>
            <person name="Wagatsuma M."/>
            <person name="Shiratori A."/>
            <person name="Sudo H."/>
            <person name="Hosoiri T."/>
            <person name="Kaku Y."/>
            <person name="Kodaira H."/>
            <person name="Kondo H."/>
            <person name="Sugawara M."/>
            <person name="Takahashi M."/>
            <person name="Kanda K."/>
            <person name="Yokoi T."/>
            <person name="Furuya T."/>
            <person name="Kikkawa E."/>
            <person name="Omura Y."/>
            <person name="Abe K."/>
            <person name="Kamihara K."/>
            <person name="Katsuta N."/>
            <person name="Sato K."/>
            <person name="Tanikawa M."/>
            <person name="Yamazaki M."/>
            <person name="Ninomiya K."/>
            <person name="Ishibashi T."/>
            <person name="Yamashita H."/>
            <person name="Murakawa K."/>
            <person name="Fujimori K."/>
            <person name="Tanai H."/>
            <person name="Kimata M."/>
            <person name="Watanabe M."/>
            <person name="Hiraoka S."/>
            <person name="Chiba Y."/>
            <person name="Ishida S."/>
            <person name="Ono Y."/>
            <person name="Takiguchi S."/>
            <person name="Watanabe S."/>
            <person name="Yosida M."/>
            <person name="Hotuta T."/>
            <person name="Kusano J."/>
            <person name="Kanehori K."/>
            <person name="Takahashi-Fujii A."/>
            <person name="Hara H."/>
            <person name="Tanase T.-O."/>
            <person name="Nomura Y."/>
            <person name="Togiya S."/>
            <person name="Komai F."/>
            <person name="Hara R."/>
            <person name="Takeuchi K."/>
            <person name="Arita M."/>
            <person name="Imose N."/>
            <person name="Musashino K."/>
            <person name="Yuuki H."/>
            <person name="Oshima A."/>
            <person name="Sasaki N."/>
            <person name="Aotsuka S."/>
            <person name="Yoshikawa Y."/>
            <person name="Matsunawa H."/>
            <person name="Ichihara T."/>
            <person name="Shiohata N."/>
            <person name="Sano S."/>
            <person name="Moriya S."/>
            <person name="Momiyama H."/>
            <person name="Satoh N."/>
            <person name="Takami S."/>
            <person name="Terashima Y."/>
            <person name="Suzuki O."/>
            <person name="Nakagawa S."/>
            <person name="Senoh A."/>
            <person name="Mizoguchi H."/>
            <person name="Goto Y."/>
            <person name="Shimizu F."/>
            <person name="Wakebe H."/>
            <person name="Hishigaki H."/>
            <person name="Watanabe T."/>
            <person name="Sugiyama A."/>
            <person name="Takemoto M."/>
            <person name="Kawakami B."/>
            <person name="Yamazaki M."/>
            <person name="Watanabe K."/>
            <person name="Kumagai A."/>
            <person name="Itakura S."/>
            <person name="Fukuzumi Y."/>
            <person name="Fujimori Y."/>
            <person name="Komiyama M."/>
            <person name="Tashiro H."/>
            <person name="Tanigami A."/>
            <person name="Fujiwara T."/>
            <person name="Ono T."/>
            <person name="Yamada K."/>
            <person name="Fujii Y."/>
            <person name="Ozaki K."/>
            <person name="Hirao M."/>
            <person name="Ohmori Y."/>
            <person name="Kawabata A."/>
            <person name="Hikiji T."/>
            <person name="Kobatake N."/>
            <person name="Inagaki H."/>
            <person name="Ikema Y."/>
            <person name="Okamoto S."/>
            <person name="Okitani R."/>
            <person name="Kawakami T."/>
            <person name="Noguchi S."/>
            <person name="Itoh T."/>
            <person name="Shigeta K."/>
            <person name="Senba T."/>
            <person name="Matsumura K."/>
            <person name="Nakajima Y."/>
            <person name="Mizuno T."/>
            <person name="Morinaga M."/>
            <person name="Sasaki M."/>
            <person name="Togashi T."/>
            <person name="Oyama M."/>
            <person name="Hata H."/>
            <person name="Watanabe M."/>
            <person name="Komatsu T."/>
            <person name="Mizushima-Sugano J."/>
            <person name="Satoh T."/>
            <person name="Shirai Y."/>
            <person name="Takahashi Y."/>
            <person name="Nakagawa K."/>
            <person name="Okumura K."/>
            <person name="Nagase T."/>
            <person name="Nomura N."/>
            <person name="Kikuchi H."/>
            <person name="Masuho Y."/>
            <person name="Yamashita R."/>
            <person name="Nakai K."/>
            <person name="Yada T."/>
            <person name="Nakamura Y."/>
            <person name="Ohara O."/>
            <person name="Isogai T."/>
            <person name="Sugano S."/>
        </authorList>
    </citation>
    <scope>NUCLEOTIDE SEQUENCE [LARGE SCALE MRNA] (ISOFORMS 1 AND 2)</scope>
    <source>
        <tissue>Skeletal muscle</tissue>
        <tissue>Uterus</tissue>
    </source>
</reference>
<reference key="2">
    <citation type="journal article" date="2003" name="Nature">
        <title>The DNA sequence and analysis of human chromosome 6.</title>
        <authorList>
            <person name="Mungall A.J."/>
            <person name="Palmer S.A."/>
            <person name="Sims S.K."/>
            <person name="Edwards C.A."/>
            <person name="Ashurst J.L."/>
            <person name="Wilming L."/>
            <person name="Jones M.C."/>
            <person name="Horton R."/>
            <person name="Hunt S.E."/>
            <person name="Scott C.E."/>
            <person name="Gilbert J.G.R."/>
            <person name="Clamp M.E."/>
            <person name="Bethel G."/>
            <person name="Milne S."/>
            <person name="Ainscough R."/>
            <person name="Almeida J.P."/>
            <person name="Ambrose K.D."/>
            <person name="Andrews T.D."/>
            <person name="Ashwell R.I.S."/>
            <person name="Babbage A.K."/>
            <person name="Bagguley C.L."/>
            <person name="Bailey J."/>
            <person name="Banerjee R."/>
            <person name="Barker D.J."/>
            <person name="Barlow K.F."/>
            <person name="Bates K."/>
            <person name="Beare D.M."/>
            <person name="Beasley H."/>
            <person name="Beasley O."/>
            <person name="Bird C.P."/>
            <person name="Blakey S.E."/>
            <person name="Bray-Allen S."/>
            <person name="Brook J."/>
            <person name="Brown A.J."/>
            <person name="Brown J.Y."/>
            <person name="Burford D.C."/>
            <person name="Burrill W."/>
            <person name="Burton J."/>
            <person name="Carder C."/>
            <person name="Carter N.P."/>
            <person name="Chapman J.C."/>
            <person name="Clark S.Y."/>
            <person name="Clark G."/>
            <person name="Clee C.M."/>
            <person name="Clegg S."/>
            <person name="Cobley V."/>
            <person name="Collier R.E."/>
            <person name="Collins J.E."/>
            <person name="Colman L.K."/>
            <person name="Corby N.R."/>
            <person name="Coville G.J."/>
            <person name="Culley K.M."/>
            <person name="Dhami P."/>
            <person name="Davies J."/>
            <person name="Dunn M."/>
            <person name="Earthrowl M.E."/>
            <person name="Ellington A.E."/>
            <person name="Evans K.A."/>
            <person name="Faulkner L."/>
            <person name="Francis M.D."/>
            <person name="Frankish A."/>
            <person name="Frankland J."/>
            <person name="French L."/>
            <person name="Garner P."/>
            <person name="Garnett J."/>
            <person name="Ghori M.J."/>
            <person name="Gilby L.M."/>
            <person name="Gillson C.J."/>
            <person name="Glithero R.J."/>
            <person name="Grafham D.V."/>
            <person name="Grant M."/>
            <person name="Gribble S."/>
            <person name="Griffiths C."/>
            <person name="Griffiths M.N.D."/>
            <person name="Hall R."/>
            <person name="Halls K.S."/>
            <person name="Hammond S."/>
            <person name="Harley J.L."/>
            <person name="Hart E.A."/>
            <person name="Heath P.D."/>
            <person name="Heathcott R."/>
            <person name="Holmes S.J."/>
            <person name="Howden P.J."/>
            <person name="Howe K.L."/>
            <person name="Howell G.R."/>
            <person name="Huckle E."/>
            <person name="Humphray S.J."/>
            <person name="Humphries M.D."/>
            <person name="Hunt A.R."/>
            <person name="Johnson C.M."/>
            <person name="Joy A.A."/>
            <person name="Kay M."/>
            <person name="Keenan S.J."/>
            <person name="Kimberley A.M."/>
            <person name="King A."/>
            <person name="Laird G.K."/>
            <person name="Langford C."/>
            <person name="Lawlor S."/>
            <person name="Leongamornlert D.A."/>
            <person name="Leversha M."/>
            <person name="Lloyd C.R."/>
            <person name="Lloyd D.M."/>
            <person name="Loveland J.E."/>
            <person name="Lovell J."/>
            <person name="Martin S."/>
            <person name="Mashreghi-Mohammadi M."/>
            <person name="Maslen G.L."/>
            <person name="Matthews L."/>
            <person name="McCann O.T."/>
            <person name="McLaren S.J."/>
            <person name="McLay K."/>
            <person name="McMurray A."/>
            <person name="Moore M.J.F."/>
            <person name="Mullikin J.C."/>
            <person name="Niblett D."/>
            <person name="Nickerson T."/>
            <person name="Novik K.L."/>
            <person name="Oliver K."/>
            <person name="Overton-Larty E.K."/>
            <person name="Parker A."/>
            <person name="Patel R."/>
            <person name="Pearce A.V."/>
            <person name="Peck A.I."/>
            <person name="Phillimore B.J.C.T."/>
            <person name="Phillips S."/>
            <person name="Plumb R.W."/>
            <person name="Porter K.M."/>
            <person name="Ramsey Y."/>
            <person name="Ranby S.A."/>
            <person name="Rice C.M."/>
            <person name="Ross M.T."/>
            <person name="Searle S.M."/>
            <person name="Sehra H.K."/>
            <person name="Sheridan E."/>
            <person name="Skuce C.D."/>
            <person name="Smith S."/>
            <person name="Smith M."/>
            <person name="Spraggon L."/>
            <person name="Squares S.L."/>
            <person name="Steward C.A."/>
            <person name="Sycamore N."/>
            <person name="Tamlyn-Hall G."/>
            <person name="Tester J."/>
            <person name="Theaker A.J."/>
            <person name="Thomas D.W."/>
            <person name="Thorpe A."/>
            <person name="Tracey A."/>
            <person name="Tromans A."/>
            <person name="Tubby B."/>
            <person name="Wall M."/>
            <person name="Wallis J.M."/>
            <person name="West A.P."/>
            <person name="White S.S."/>
            <person name="Whitehead S.L."/>
            <person name="Whittaker H."/>
            <person name="Wild A."/>
            <person name="Willey D.J."/>
            <person name="Wilmer T.E."/>
            <person name="Wood J.M."/>
            <person name="Wray P.W."/>
            <person name="Wyatt J.C."/>
            <person name="Young L."/>
            <person name="Younger R.M."/>
            <person name="Bentley D.R."/>
            <person name="Coulson A."/>
            <person name="Durbin R.M."/>
            <person name="Hubbard T."/>
            <person name="Sulston J.E."/>
            <person name="Dunham I."/>
            <person name="Rogers J."/>
            <person name="Beck S."/>
        </authorList>
    </citation>
    <scope>NUCLEOTIDE SEQUENCE [LARGE SCALE GENOMIC DNA]</scope>
</reference>
<reference key="3">
    <citation type="submission" date="2005-07" db="EMBL/GenBank/DDBJ databases">
        <authorList>
            <person name="Mural R.J."/>
            <person name="Istrail S."/>
            <person name="Sutton G.G."/>
            <person name="Florea L."/>
            <person name="Halpern A.L."/>
            <person name="Mobarry C.M."/>
            <person name="Lippert R."/>
            <person name="Walenz B."/>
            <person name="Shatkay H."/>
            <person name="Dew I."/>
            <person name="Miller J.R."/>
            <person name="Flanigan M.J."/>
            <person name="Edwards N.J."/>
            <person name="Bolanos R."/>
            <person name="Fasulo D."/>
            <person name="Halldorsson B.V."/>
            <person name="Hannenhalli S."/>
            <person name="Turner R."/>
            <person name="Yooseph S."/>
            <person name="Lu F."/>
            <person name="Nusskern D.R."/>
            <person name="Shue B.C."/>
            <person name="Zheng X.H."/>
            <person name="Zhong F."/>
            <person name="Delcher A.L."/>
            <person name="Huson D.H."/>
            <person name="Kravitz S.A."/>
            <person name="Mouchard L."/>
            <person name="Reinert K."/>
            <person name="Remington K.A."/>
            <person name="Clark A.G."/>
            <person name="Waterman M.S."/>
            <person name="Eichler E.E."/>
            <person name="Adams M.D."/>
            <person name="Hunkapiller M.W."/>
            <person name="Myers E.W."/>
            <person name="Venter J.C."/>
        </authorList>
    </citation>
    <scope>NUCLEOTIDE SEQUENCE [LARGE SCALE GENOMIC DNA]</scope>
</reference>
<reference key="4">
    <citation type="journal article" date="2004" name="Genome Res.">
        <title>The status, quality, and expansion of the NIH full-length cDNA project: the Mammalian Gene Collection (MGC).</title>
        <authorList>
            <consortium name="The MGC Project Team"/>
        </authorList>
    </citation>
    <scope>NUCLEOTIDE SEQUENCE [LARGE SCALE MRNA] (ISOFORM 1)</scope>
    <source>
        <tissue>Placenta</tissue>
        <tissue>Uterus</tissue>
    </source>
</reference>
<reference key="5">
    <citation type="journal article" date="2008" name="Proc. Natl. Acad. Sci. U.S.A.">
        <title>A quantitative atlas of mitotic phosphorylation.</title>
        <authorList>
            <person name="Dephoure N."/>
            <person name="Zhou C."/>
            <person name="Villen J."/>
            <person name="Beausoleil S.A."/>
            <person name="Bakalarski C.E."/>
            <person name="Elledge S.J."/>
            <person name="Gygi S.P."/>
        </authorList>
    </citation>
    <scope>IDENTIFICATION BY MASS SPECTROMETRY [LARGE SCALE ANALYSIS]</scope>
    <source>
        <tissue>Cervix carcinoma</tissue>
    </source>
</reference>
<reference key="6">
    <citation type="journal article" date="2009" name="Anal. Chem.">
        <title>Lys-N and trypsin cover complementary parts of the phosphoproteome in a refined SCX-based approach.</title>
        <authorList>
            <person name="Gauci S."/>
            <person name="Helbig A.O."/>
            <person name="Slijper M."/>
            <person name="Krijgsveld J."/>
            <person name="Heck A.J."/>
            <person name="Mohammed S."/>
        </authorList>
    </citation>
    <scope>IDENTIFICATION BY MASS SPECTROMETRY [LARGE SCALE ANALYSIS]</scope>
</reference>
<reference key="7">
    <citation type="journal article" date="2009" name="Sci. Signal.">
        <title>Quantitative phosphoproteomic analysis of T cell receptor signaling reveals system-wide modulation of protein-protein interactions.</title>
        <authorList>
            <person name="Mayya V."/>
            <person name="Lundgren D.H."/>
            <person name="Hwang S.-I."/>
            <person name="Rezaul K."/>
            <person name="Wu L."/>
            <person name="Eng J.K."/>
            <person name="Rodionov V."/>
            <person name="Han D.K."/>
        </authorList>
    </citation>
    <scope>PHOSPHORYLATION [LARGE SCALE ANALYSIS] AT SER-215</scope>
    <scope>IDENTIFICATION BY MASS SPECTROMETRY [LARGE SCALE ANALYSIS]</scope>
    <source>
        <tissue>Leukemic T-cell</tissue>
    </source>
</reference>
<reference key="8">
    <citation type="journal article" date="2010" name="Sci. Signal.">
        <title>Quantitative phosphoproteomics reveals widespread full phosphorylation site occupancy during mitosis.</title>
        <authorList>
            <person name="Olsen J.V."/>
            <person name="Vermeulen M."/>
            <person name="Santamaria A."/>
            <person name="Kumar C."/>
            <person name="Miller M.L."/>
            <person name="Jensen L.J."/>
            <person name="Gnad F."/>
            <person name="Cox J."/>
            <person name="Jensen T.S."/>
            <person name="Nigg E.A."/>
            <person name="Brunak S."/>
            <person name="Mann M."/>
        </authorList>
    </citation>
    <scope>PHOSPHORYLATION [LARGE SCALE ANALYSIS] AT SER-215 AND SER-272</scope>
    <scope>IDENTIFICATION BY MASS SPECTROMETRY [LARGE SCALE ANALYSIS]</scope>
    <source>
        <tissue>Cervix carcinoma</tissue>
    </source>
</reference>
<reference key="9">
    <citation type="journal article" date="2011" name="Sci. Signal.">
        <title>System-wide temporal characterization of the proteome and phosphoproteome of human embryonic stem cell differentiation.</title>
        <authorList>
            <person name="Rigbolt K.T."/>
            <person name="Prokhorova T.A."/>
            <person name="Akimov V."/>
            <person name="Henningsen J."/>
            <person name="Johansen P.T."/>
            <person name="Kratchmarova I."/>
            <person name="Kassem M."/>
            <person name="Mann M."/>
            <person name="Olsen J.V."/>
            <person name="Blagoev B."/>
        </authorList>
    </citation>
    <scope>PHOSPHORYLATION [LARGE SCALE ANALYSIS] AT SER-215</scope>
    <scope>IDENTIFICATION BY MASS SPECTROMETRY [LARGE SCALE ANALYSIS]</scope>
</reference>
<reference key="10">
    <citation type="journal article" date="2013" name="J. Proteome Res.">
        <title>Toward a comprehensive characterization of a human cancer cell phosphoproteome.</title>
        <authorList>
            <person name="Zhou H."/>
            <person name="Di Palma S."/>
            <person name="Preisinger C."/>
            <person name="Peng M."/>
            <person name="Polat A.N."/>
            <person name="Heck A.J."/>
            <person name="Mohammed S."/>
        </authorList>
    </citation>
    <scope>PHOSPHORYLATION [LARGE SCALE ANALYSIS] AT SER-215; SER-222 AND SER-272</scope>
    <scope>IDENTIFICATION BY MASS SPECTROMETRY [LARGE SCALE ANALYSIS]</scope>
    <source>
        <tissue>Cervix carcinoma</tissue>
        <tissue>Erythroleukemia</tissue>
    </source>
</reference>
<reference key="11">
    <citation type="journal article" date="2015" name="Tumor Biol.">
        <title>C6orf106 enhances NSCLC cell invasion by upregulating vimentin, and downregulating E-cadherin and P120ctn.</title>
        <authorList>
            <person name="Zhang X."/>
            <person name="Miao Y."/>
            <person name="Yu X."/>
            <person name="Zhang Y."/>
            <person name="Jiang G."/>
            <person name="Liu Y."/>
            <person name="Yu J."/>
            <person name="Han Q."/>
            <person name="Zhao H."/>
            <person name="Wang E."/>
        </authorList>
    </citation>
    <scope>TISSUE SPECIFICITY</scope>
    <scope>SUBCELLULAR LOCATION</scope>
</reference>
<reference key="12">
    <citation type="journal article" date="2018" name="J. Biol. Chem.">
        <title>C6orf106 is a novel inhibitor of the interferon-regulatory factor 3-dependent innate antiviral response.</title>
        <authorList>
            <person name="Ambrose R.L."/>
            <person name="Liu Y.C."/>
            <person name="Adams T.E."/>
            <person name="Bean A.G.D."/>
            <person name="Stewart C.R."/>
        </authorList>
    </citation>
    <scope>FUNCTION</scope>
    <scope>INDUCTION BY DSRNA</scope>
    <scope>INTERACTION WITH IRF3</scope>
    <scope>SUBCELLULAR LOCATION</scope>
</reference>
<keyword id="KW-0002">3D-structure</keyword>
<keyword id="KW-0025">Alternative splicing</keyword>
<keyword id="KW-0963">Cytoplasm</keyword>
<keyword id="KW-0391">Immunity</keyword>
<keyword id="KW-0399">Innate immunity</keyword>
<keyword id="KW-0539">Nucleus</keyword>
<keyword id="KW-0597">Phosphoprotein</keyword>
<keyword id="KW-1267">Proteomics identification</keyword>
<keyword id="KW-1185">Reference proteome</keyword>
<sequence length="298" mass="32872">MEGMDVDLDPELMQKFSCLGTTDKDVLISEFQRLLGFQLNPAGCAFFLDMTNWNLQAAIGAYYDFESPNISVPSMSFVEDVTIGEGESIPPDTQFVKTWRIQNSGAEAWPPGVCLKYVGGDQFGHVNMVMVRSLEPQEIADVSVQMCSPSRAGMYQGQWRMCTATGLYYGDVIWVILSVEVGGLLGVTQQLSSFETEFNTQPHRKVEGNFNPFASPQKNRQSDENNLKDPGGSEFDSISKNTWAPAPDTWAPAPDQTEQDQNRLSQNSVNLSPSSHANNLSVVTYSKGLHGPYPFGQS</sequence>
<gene>
    <name evidence="6" type="primary">ILRUN</name>
    <name evidence="6" type="synonym">C6orf106</name>
</gene>
<feature type="chain" id="PRO_0000089519" description="Protein ILRUN">
    <location>
        <begin position="1"/>
        <end position="298"/>
    </location>
</feature>
<feature type="region of interest" description="Disordered" evidence="1">
    <location>
        <begin position="199"/>
        <end position="277"/>
    </location>
</feature>
<feature type="compositionally biased region" description="Low complexity" evidence="1">
    <location>
        <begin position="242"/>
        <end position="255"/>
    </location>
</feature>
<feature type="compositionally biased region" description="Polar residues" evidence="1">
    <location>
        <begin position="262"/>
        <end position="277"/>
    </location>
</feature>
<feature type="modified residue" description="Phosphoserine" evidence="7 8 9 10">
    <location>
        <position position="215"/>
    </location>
</feature>
<feature type="modified residue" description="Phosphoserine" evidence="10">
    <location>
        <position position="222"/>
    </location>
</feature>
<feature type="modified residue" description="Phosphoserine" evidence="8 10">
    <location>
        <position position="272"/>
    </location>
</feature>
<feature type="splice variant" id="VSP_017259" description="In isoform 2." evidence="4">
    <location>
        <begin position="105"/>
        <end position="170"/>
    </location>
</feature>
<feature type="sequence conflict" description="In Ref. 1; BAB71327." evidence="5" ref="1">
    <original>N</original>
    <variation>S</variation>
    <location>
        <position position="54"/>
    </location>
</feature>
<feature type="strand" evidence="11">
    <location>
        <begin position="76"/>
        <end position="83"/>
    </location>
</feature>
<feature type="strand" evidence="11">
    <location>
        <begin position="94"/>
        <end position="102"/>
    </location>
</feature>
<feature type="strand" evidence="11">
    <location>
        <begin position="105"/>
        <end position="107"/>
    </location>
</feature>
<feature type="strand" evidence="11">
    <location>
        <begin position="114"/>
        <end position="120"/>
    </location>
</feature>
<feature type="strand" evidence="11">
    <location>
        <begin position="128"/>
        <end position="130"/>
    </location>
</feature>
<feature type="strand" evidence="11">
    <location>
        <begin position="139"/>
        <end position="147"/>
    </location>
</feature>
<feature type="strand" evidence="11">
    <location>
        <begin position="153"/>
        <end position="162"/>
    </location>
</feature>
<feature type="strand" evidence="11">
    <location>
        <begin position="168"/>
        <end position="179"/>
    </location>
</feature>